<organism>
    <name type="scientific">Frankia casuarinae (strain DSM 45818 / CECT 9043 / HFP020203 / CcI3)</name>
    <dbReference type="NCBI Taxonomy" id="106370"/>
    <lineage>
        <taxon>Bacteria</taxon>
        <taxon>Bacillati</taxon>
        <taxon>Actinomycetota</taxon>
        <taxon>Actinomycetes</taxon>
        <taxon>Frankiales</taxon>
        <taxon>Frankiaceae</taxon>
        <taxon>Frankia</taxon>
    </lineage>
</organism>
<dbReference type="EC" id="1.2.1.38" evidence="1"/>
<dbReference type="EMBL" id="CP000249">
    <property type="protein sequence ID" value="ABD12532.1"/>
    <property type="molecule type" value="Genomic_DNA"/>
</dbReference>
<dbReference type="RefSeq" id="WP_011437560.1">
    <property type="nucleotide sequence ID" value="NZ_JENI01000044.1"/>
</dbReference>
<dbReference type="SMR" id="Q2J860"/>
<dbReference type="STRING" id="106370.Francci3_3175"/>
<dbReference type="KEGG" id="fra:Francci3_3175"/>
<dbReference type="eggNOG" id="COG0002">
    <property type="taxonomic scope" value="Bacteria"/>
</dbReference>
<dbReference type="HOGENOM" id="CLU_006384_0_0_11"/>
<dbReference type="OrthoDB" id="9801289at2"/>
<dbReference type="PhylomeDB" id="Q2J860"/>
<dbReference type="UniPathway" id="UPA00068">
    <property type="reaction ID" value="UER00108"/>
</dbReference>
<dbReference type="Proteomes" id="UP000001937">
    <property type="component" value="Chromosome"/>
</dbReference>
<dbReference type="GO" id="GO:0005737">
    <property type="term" value="C:cytoplasm"/>
    <property type="evidence" value="ECO:0007669"/>
    <property type="project" value="UniProtKB-SubCell"/>
</dbReference>
<dbReference type="GO" id="GO:0003942">
    <property type="term" value="F:N-acetyl-gamma-glutamyl-phosphate reductase activity"/>
    <property type="evidence" value="ECO:0007669"/>
    <property type="project" value="UniProtKB-UniRule"/>
</dbReference>
<dbReference type="GO" id="GO:0051287">
    <property type="term" value="F:NAD binding"/>
    <property type="evidence" value="ECO:0007669"/>
    <property type="project" value="InterPro"/>
</dbReference>
<dbReference type="GO" id="GO:0070401">
    <property type="term" value="F:NADP+ binding"/>
    <property type="evidence" value="ECO:0007669"/>
    <property type="project" value="InterPro"/>
</dbReference>
<dbReference type="GO" id="GO:0006526">
    <property type="term" value="P:L-arginine biosynthetic process"/>
    <property type="evidence" value="ECO:0007669"/>
    <property type="project" value="UniProtKB-UniRule"/>
</dbReference>
<dbReference type="CDD" id="cd24148">
    <property type="entry name" value="AGPR_1_actinobacAGPR_like"/>
    <property type="match status" value="1"/>
</dbReference>
<dbReference type="CDD" id="cd23934">
    <property type="entry name" value="AGPR_1_C"/>
    <property type="match status" value="1"/>
</dbReference>
<dbReference type="FunFam" id="3.30.360.10:FF:000014">
    <property type="entry name" value="N-acetyl-gamma-glutamyl-phosphate reductase"/>
    <property type="match status" value="1"/>
</dbReference>
<dbReference type="Gene3D" id="3.30.360.10">
    <property type="entry name" value="Dihydrodipicolinate Reductase, domain 2"/>
    <property type="match status" value="1"/>
</dbReference>
<dbReference type="Gene3D" id="3.40.50.720">
    <property type="entry name" value="NAD(P)-binding Rossmann-like Domain"/>
    <property type="match status" value="1"/>
</dbReference>
<dbReference type="HAMAP" id="MF_00150">
    <property type="entry name" value="ArgC_type1"/>
    <property type="match status" value="1"/>
</dbReference>
<dbReference type="InterPro" id="IPR023013">
    <property type="entry name" value="AGPR_AS"/>
</dbReference>
<dbReference type="InterPro" id="IPR000706">
    <property type="entry name" value="AGPR_type-1"/>
</dbReference>
<dbReference type="InterPro" id="IPR036291">
    <property type="entry name" value="NAD(P)-bd_dom_sf"/>
</dbReference>
<dbReference type="InterPro" id="IPR050085">
    <property type="entry name" value="NAGSA_dehydrogenase"/>
</dbReference>
<dbReference type="InterPro" id="IPR000534">
    <property type="entry name" value="Semialdehyde_DH_NAD-bd"/>
</dbReference>
<dbReference type="NCBIfam" id="TIGR01850">
    <property type="entry name" value="argC"/>
    <property type="match status" value="1"/>
</dbReference>
<dbReference type="PANTHER" id="PTHR32338:SF10">
    <property type="entry name" value="N-ACETYL-GAMMA-GLUTAMYL-PHOSPHATE REDUCTASE, CHLOROPLASTIC-RELATED"/>
    <property type="match status" value="1"/>
</dbReference>
<dbReference type="PANTHER" id="PTHR32338">
    <property type="entry name" value="N-ACETYL-GAMMA-GLUTAMYL-PHOSPHATE REDUCTASE, CHLOROPLASTIC-RELATED-RELATED"/>
    <property type="match status" value="1"/>
</dbReference>
<dbReference type="Pfam" id="PF01118">
    <property type="entry name" value="Semialdhyde_dh"/>
    <property type="match status" value="1"/>
</dbReference>
<dbReference type="Pfam" id="PF22698">
    <property type="entry name" value="Semialdhyde_dhC_1"/>
    <property type="match status" value="1"/>
</dbReference>
<dbReference type="SMART" id="SM00859">
    <property type="entry name" value="Semialdhyde_dh"/>
    <property type="match status" value="1"/>
</dbReference>
<dbReference type="SUPFAM" id="SSF55347">
    <property type="entry name" value="Glyceraldehyde-3-phosphate dehydrogenase-like, C-terminal domain"/>
    <property type="match status" value="1"/>
</dbReference>
<dbReference type="SUPFAM" id="SSF51735">
    <property type="entry name" value="NAD(P)-binding Rossmann-fold domains"/>
    <property type="match status" value="1"/>
</dbReference>
<dbReference type="PROSITE" id="PS01224">
    <property type="entry name" value="ARGC"/>
    <property type="match status" value="1"/>
</dbReference>
<sequence length="342" mass="34699">MGVTVAVAGASGYGGGELLRLLLAHPEIKIGALAANASAGLPVTEVHPHLPDLEGRVFTDAAALAGTDADIVFLALPHGQSAAVAATLPDTVRVADLGADHRLVDPEAWRRAYGGEHAGTWTYGLPELPWARAEIAASRRVAIPGCYPTATSLGLVPLLVGGLVEPADLVVVAASGTSGAGRSATVNLLGSEVMGDLTAYKVGTHQHRPEITQTLSRAAGMTVTVSFTPVLAPLPRGILATSTGRATPGTDADAVYETLRAAYAGEPFVRVLPPGRWPHTAATLGGNAVHVQGTFDPETGRAIVVTAIDNLGKGAAGQALQCANLMLGLPETAGLTAQGIAP</sequence>
<accession>Q2J860</accession>
<name>ARGC_FRACC</name>
<protein>
    <recommendedName>
        <fullName evidence="1">N-acetyl-gamma-glutamyl-phosphate reductase</fullName>
        <shortName evidence="1">AGPR</shortName>
        <ecNumber evidence="1">1.2.1.38</ecNumber>
    </recommendedName>
    <alternativeName>
        <fullName evidence="1">N-acetyl-glutamate semialdehyde dehydrogenase</fullName>
        <shortName evidence="1">NAGSA dehydrogenase</shortName>
    </alternativeName>
</protein>
<reference key="1">
    <citation type="journal article" date="2007" name="Genome Res.">
        <title>Genome characteristics of facultatively symbiotic Frankia sp. strains reflect host range and host plant biogeography.</title>
        <authorList>
            <person name="Normand P."/>
            <person name="Lapierre P."/>
            <person name="Tisa L.S."/>
            <person name="Gogarten J.P."/>
            <person name="Alloisio N."/>
            <person name="Bagnarol E."/>
            <person name="Bassi C.A."/>
            <person name="Berry A.M."/>
            <person name="Bickhart D.M."/>
            <person name="Choisne N."/>
            <person name="Couloux A."/>
            <person name="Cournoyer B."/>
            <person name="Cruveiller S."/>
            <person name="Daubin V."/>
            <person name="Demange N."/>
            <person name="Francino M.P."/>
            <person name="Goltsman E."/>
            <person name="Huang Y."/>
            <person name="Kopp O.R."/>
            <person name="Labarre L."/>
            <person name="Lapidus A."/>
            <person name="Lavire C."/>
            <person name="Marechal J."/>
            <person name="Martinez M."/>
            <person name="Mastronunzio J.E."/>
            <person name="Mullin B.C."/>
            <person name="Niemann J."/>
            <person name="Pujic P."/>
            <person name="Rawnsley T."/>
            <person name="Rouy Z."/>
            <person name="Schenowitz C."/>
            <person name="Sellstedt A."/>
            <person name="Tavares F."/>
            <person name="Tomkins J.P."/>
            <person name="Vallenet D."/>
            <person name="Valverde C."/>
            <person name="Wall L.G."/>
            <person name="Wang Y."/>
            <person name="Medigue C."/>
            <person name="Benson D.R."/>
        </authorList>
    </citation>
    <scope>NUCLEOTIDE SEQUENCE [LARGE SCALE GENOMIC DNA]</scope>
    <source>
        <strain>DSM 45818 / CECT 9043 / HFP020203 / CcI3</strain>
    </source>
</reference>
<evidence type="ECO:0000255" key="1">
    <source>
        <dbReference type="HAMAP-Rule" id="MF_00150"/>
    </source>
</evidence>
<comment type="function">
    <text evidence="1">Catalyzes the NADPH-dependent reduction of N-acetyl-5-glutamyl phosphate to yield N-acetyl-L-glutamate 5-semialdehyde.</text>
</comment>
<comment type="catalytic activity">
    <reaction evidence="1">
        <text>N-acetyl-L-glutamate 5-semialdehyde + phosphate + NADP(+) = N-acetyl-L-glutamyl 5-phosphate + NADPH + H(+)</text>
        <dbReference type="Rhea" id="RHEA:21588"/>
        <dbReference type="ChEBI" id="CHEBI:15378"/>
        <dbReference type="ChEBI" id="CHEBI:29123"/>
        <dbReference type="ChEBI" id="CHEBI:43474"/>
        <dbReference type="ChEBI" id="CHEBI:57783"/>
        <dbReference type="ChEBI" id="CHEBI:57936"/>
        <dbReference type="ChEBI" id="CHEBI:58349"/>
        <dbReference type="EC" id="1.2.1.38"/>
    </reaction>
</comment>
<comment type="pathway">
    <text evidence="1">Amino-acid biosynthesis; L-arginine biosynthesis; N(2)-acetyl-L-ornithine from L-glutamate: step 3/4.</text>
</comment>
<comment type="subcellular location">
    <subcellularLocation>
        <location evidence="1">Cytoplasm</location>
    </subcellularLocation>
</comment>
<comment type="similarity">
    <text evidence="1">Belongs to the NAGSA dehydrogenase family. Type 1 subfamily.</text>
</comment>
<proteinExistence type="inferred from homology"/>
<gene>
    <name evidence="1" type="primary">argC</name>
    <name type="ordered locus">Francci3_3175</name>
</gene>
<keyword id="KW-0028">Amino-acid biosynthesis</keyword>
<keyword id="KW-0055">Arginine biosynthesis</keyword>
<keyword id="KW-0963">Cytoplasm</keyword>
<keyword id="KW-0521">NADP</keyword>
<keyword id="KW-0560">Oxidoreductase</keyword>
<keyword id="KW-1185">Reference proteome</keyword>
<feature type="chain" id="PRO_1000010995" description="N-acetyl-gamma-glutamyl-phosphate reductase">
    <location>
        <begin position="1"/>
        <end position="342"/>
    </location>
</feature>
<feature type="active site" evidence="1">
    <location>
        <position position="146"/>
    </location>
</feature>